<accession>Q5UR19</accession>
<organismHost>
    <name type="scientific">Acanthamoeba polyphaga</name>
    <name type="common">Amoeba</name>
    <dbReference type="NCBI Taxonomy" id="5757"/>
</organismHost>
<sequence length="492" mass="54291">MIRPNMFALLMLVVLAITSVNADCPKVKRDVCVIGGGAAGMSIATLLKDRGYDPVVLERESVVGGHCNTQYFDPPEGETVDWIDYGVQLFMNTTQLNLTGVGSWSLATDKFAERFIGPNATLPLEGNDINLYVNMETGELVIPNVNETALNNALGVYFYLLSMYPWTSDGKYTGTIPPELLQSFGDFASPFGLNAMAEIFRAFGYNSGIAYGNYTNLPALYMLNAASMSVMQVLLGPSTTTFKVKGGCYSVYRGMSDYLGSENIVLNATVTELTRSFFLSTKSPRLRGYTTRADGSTDNFEYECEKVVVAHPPTLDDLSYVDLTQNEQDLFSNVEVAYYYAGVADISSSYLNGNSFQVMNADPSSEYNVPFGPGLISLGRYVDYGPTQIQAISNTNLEVCDMLEIITRDFENIPSWILNSFDIKTFDQHKEYAPHFNLASLSNPVSPYAKLAELQGSNNTYWVSALNRYTAATAHVWDEANIIVNTYFPSKN</sequence>
<name>YR656_MIMIV</name>
<keyword id="KW-0325">Glycoprotein</keyword>
<keyword id="KW-1185">Reference proteome</keyword>
<keyword id="KW-0964">Secreted</keyword>
<keyword id="KW-0732">Signal</keyword>
<proteinExistence type="inferred from homology"/>
<protein>
    <recommendedName>
        <fullName>Uncharacterized protein R656</fullName>
    </recommendedName>
</protein>
<feature type="signal peptide" evidence="1">
    <location>
        <begin position="1"/>
        <end position="22"/>
    </location>
</feature>
<feature type="chain" id="PRO_0000247409" description="Uncharacterized protein R656">
    <location>
        <begin position="23"/>
        <end position="492"/>
    </location>
</feature>
<feature type="glycosylation site" description="N-linked (GlcNAc...) asparagine; by host" evidence="1">
    <location>
        <position position="92"/>
    </location>
</feature>
<feature type="glycosylation site" description="N-linked (GlcNAc...) asparagine; by host" evidence="1">
    <location>
        <position position="97"/>
    </location>
</feature>
<feature type="glycosylation site" description="N-linked (GlcNAc...) asparagine; by host" evidence="1">
    <location>
        <position position="119"/>
    </location>
</feature>
<feature type="glycosylation site" description="N-linked (GlcNAc...) asparagine; by host" evidence="1">
    <location>
        <position position="146"/>
    </location>
</feature>
<feature type="glycosylation site" description="N-linked (GlcNAc...) asparagine; by host" evidence="1">
    <location>
        <position position="213"/>
    </location>
</feature>
<feature type="glycosylation site" description="N-linked (GlcNAc...) asparagine; by host" evidence="1">
    <location>
        <position position="267"/>
    </location>
</feature>
<feature type="glycosylation site" description="N-linked (GlcNAc...) asparagine; by host" evidence="1">
    <location>
        <position position="458"/>
    </location>
</feature>
<reference key="1">
    <citation type="journal article" date="2004" name="Science">
        <title>The 1.2-megabase genome sequence of Mimivirus.</title>
        <authorList>
            <person name="Raoult D."/>
            <person name="Audic S."/>
            <person name="Robert C."/>
            <person name="Abergel C."/>
            <person name="Renesto P."/>
            <person name="Ogata H."/>
            <person name="La Scola B."/>
            <person name="Susan M."/>
            <person name="Claverie J.-M."/>
        </authorList>
    </citation>
    <scope>NUCLEOTIDE SEQUENCE [LARGE SCALE GENOMIC DNA]</scope>
    <source>
        <strain>Rowbotham-Bradford</strain>
    </source>
</reference>
<evidence type="ECO:0000255" key="1"/>
<evidence type="ECO:0000305" key="2"/>
<organism>
    <name type="scientific">Acanthamoeba polyphaga mimivirus</name>
    <name type="common">APMV</name>
    <dbReference type="NCBI Taxonomy" id="212035"/>
    <lineage>
        <taxon>Viruses</taxon>
        <taxon>Varidnaviria</taxon>
        <taxon>Bamfordvirae</taxon>
        <taxon>Nucleocytoviricota</taxon>
        <taxon>Megaviricetes</taxon>
        <taxon>Imitervirales</taxon>
        <taxon>Mimiviridae</taxon>
        <taxon>Megamimivirinae</taxon>
        <taxon>Mimivirus</taxon>
        <taxon>Mimivirus bradfordmassiliense</taxon>
    </lineage>
</organism>
<gene>
    <name type="ordered locus">MIMI_R656</name>
</gene>
<comment type="subcellular location">
    <subcellularLocation>
        <location evidence="2">Secreted</location>
    </subcellularLocation>
</comment>
<dbReference type="EMBL" id="AY653733">
    <property type="protein sequence ID" value="AAV50917.1"/>
    <property type="molecule type" value="Genomic_DNA"/>
</dbReference>
<dbReference type="SMR" id="Q5UR19"/>
<dbReference type="KEGG" id="vg:9925301"/>
<dbReference type="OrthoDB" id="5937at10239"/>
<dbReference type="Proteomes" id="UP000001134">
    <property type="component" value="Genome"/>
</dbReference>
<dbReference type="GO" id="GO:0005576">
    <property type="term" value="C:extracellular region"/>
    <property type="evidence" value="ECO:0007669"/>
    <property type="project" value="UniProtKB-SubCell"/>
</dbReference>
<dbReference type="GO" id="GO:0016491">
    <property type="term" value="F:oxidoreductase activity"/>
    <property type="evidence" value="ECO:0007669"/>
    <property type="project" value="UniProtKB-ARBA"/>
</dbReference>
<dbReference type="Gene3D" id="1.10.405.20">
    <property type="match status" value="1"/>
</dbReference>
<dbReference type="Gene3D" id="3.30.70.1990">
    <property type="match status" value="1"/>
</dbReference>
<dbReference type="Gene3D" id="3.50.50.60">
    <property type="entry name" value="FAD/NAD(P)-binding domain"/>
    <property type="match status" value="1"/>
</dbReference>
<dbReference type="InterPro" id="IPR036188">
    <property type="entry name" value="FAD/NAD-bd_sf"/>
</dbReference>
<dbReference type="InterPro" id="IPR050703">
    <property type="entry name" value="Flavin_MAO"/>
</dbReference>
<dbReference type="PANTHER" id="PTHR43563">
    <property type="entry name" value="AMINE OXIDASE"/>
    <property type="match status" value="1"/>
</dbReference>
<dbReference type="PANTHER" id="PTHR43563:SF1">
    <property type="entry name" value="AMINE OXIDASE [FLAVIN-CONTAINING] B"/>
    <property type="match status" value="1"/>
</dbReference>
<dbReference type="Pfam" id="PF13450">
    <property type="entry name" value="NAD_binding_8"/>
    <property type="match status" value="1"/>
</dbReference>
<dbReference type="SUPFAM" id="SSF51905">
    <property type="entry name" value="FAD/NAD(P)-binding domain"/>
    <property type="match status" value="1"/>
</dbReference>